<proteinExistence type="evidence at protein level"/>
<comment type="function">
    <text>Stabilizes the F-actin cables forming the F-actin ring that surrounds the nucleus during interphase. May work in conjunction with myo2.</text>
</comment>
<comment type="subunit">
    <text>Binds to cdc4 and rlc1.</text>
</comment>
<comment type="similarity">
    <text evidence="6">Belongs to the TRAFAC class myosin-kinesin ATPase superfamily. Myosin family.</text>
</comment>
<dbReference type="EMBL" id="AB007633">
    <property type="protein sequence ID" value="BAA24579.1"/>
    <property type="molecule type" value="Genomic_DNA"/>
</dbReference>
<dbReference type="EMBL" id="AF029788">
    <property type="protein sequence ID" value="AAC04615.1"/>
    <property type="molecule type" value="Genomic_DNA"/>
</dbReference>
<dbReference type="EMBL" id="CU329670">
    <property type="protein sequence ID" value="CAB11475.1"/>
    <property type="molecule type" value="Genomic_DNA"/>
</dbReference>
<dbReference type="EMBL" id="AB027812">
    <property type="protein sequence ID" value="BAA87116.1"/>
    <property type="molecule type" value="Genomic_DNA"/>
</dbReference>
<dbReference type="PIR" id="T38774">
    <property type="entry name" value="T38774"/>
</dbReference>
<dbReference type="RefSeq" id="NP_593816.1">
    <property type="nucleotide sequence ID" value="NM_001019246.2"/>
</dbReference>
<dbReference type="SMR" id="O14157"/>
<dbReference type="BioGRID" id="279991">
    <property type="interactions" value="62"/>
</dbReference>
<dbReference type="FunCoup" id="O14157">
    <property type="interactions" value="82"/>
</dbReference>
<dbReference type="STRING" id="284812.O14157"/>
<dbReference type="iPTMnet" id="O14157"/>
<dbReference type="PaxDb" id="4896-SPAC4A8.05c.1"/>
<dbReference type="EnsemblFungi" id="SPAC4A8.05c.1">
    <property type="protein sequence ID" value="SPAC4A8.05c.1:pep"/>
    <property type="gene ID" value="SPAC4A8.05c"/>
</dbReference>
<dbReference type="GeneID" id="2543576"/>
<dbReference type="KEGG" id="spo:2543576"/>
<dbReference type="PomBase" id="SPAC4A8.05c"/>
<dbReference type="VEuPathDB" id="FungiDB:SPAC4A8.05c"/>
<dbReference type="eggNOG" id="KOG0161">
    <property type="taxonomic scope" value="Eukaryota"/>
</dbReference>
<dbReference type="HOGENOM" id="CLU_000192_5_3_1"/>
<dbReference type="InParanoid" id="O14157"/>
<dbReference type="OMA" id="VGANLDW"/>
<dbReference type="PhylomeDB" id="O14157"/>
<dbReference type="Reactome" id="R-SPO-5627123">
    <property type="pathway name" value="RHO GTPases activate PAKs"/>
</dbReference>
<dbReference type="PRO" id="PR:O14157"/>
<dbReference type="Proteomes" id="UP000002485">
    <property type="component" value="Chromosome I"/>
</dbReference>
<dbReference type="GO" id="GO:0032153">
    <property type="term" value="C:cell division site"/>
    <property type="evidence" value="ECO:0000314"/>
    <property type="project" value="PomBase"/>
</dbReference>
<dbReference type="GO" id="GO:0005737">
    <property type="term" value="C:cytoplasm"/>
    <property type="evidence" value="ECO:0000314"/>
    <property type="project" value="PomBase"/>
</dbReference>
<dbReference type="GO" id="GO:0000931">
    <property type="term" value="C:gamma-tubulin ring complex"/>
    <property type="evidence" value="ECO:0000315"/>
    <property type="project" value="PomBase"/>
</dbReference>
<dbReference type="GO" id="GO:0031097">
    <property type="term" value="C:medial cortex"/>
    <property type="evidence" value="ECO:0000314"/>
    <property type="project" value="PomBase"/>
</dbReference>
<dbReference type="GO" id="GO:0110085">
    <property type="term" value="C:mitotic actomyosin contractile ring"/>
    <property type="evidence" value="ECO:0000314"/>
    <property type="project" value="PomBase"/>
</dbReference>
<dbReference type="GO" id="GO:0120104">
    <property type="term" value="C:mitotic actomyosin contractile ring, proximal layer"/>
    <property type="evidence" value="ECO:0000314"/>
    <property type="project" value="PomBase"/>
</dbReference>
<dbReference type="GO" id="GO:0032982">
    <property type="term" value="C:myosin filament"/>
    <property type="evidence" value="ECO:0000318"/>
    <property type="project" value="GO_Central"/>
</dbReference>
<dbReference type="GO" id="GO:0016460">
    <property type="term" value="C:myosin II complex"/>
    <property type="evidence" value="ECO:0000318"/>
    <property type="project" value="GO_Central"/>
</dbReference>
<dbReference type="GO" id="GO:0051015">
    <property type="term" value="F:actin filament binding"/>
    <property type="evidence" value="ECO:0000318"/>
    <property type="project" value="GO_Central"/>
</dbReference>
<dbReference type="GO" id="GO:0005524">
    <property type="term" value="F:ATP binding"/>
    <property type="evidence" value="ECO:0000255"/>
    <property type="project" value="PomBase"/>
</dbReference>
<dbReference type="GO" id="GO:0016887">
    <property type="term" value="F:ATP hydrolysis activity"/>
    <property type="evidence" value="ECO:0000305"/>
    <property type="project" value="PomBase"/>
</dbReference>
<dbReference type="GO" id="GO:0000146">
    <property type="term" value="F:microfilament motor activity"/>
    <property type="evidence" value="ECO:0000318"/>
    <property type="project" value="GO_Central"/>
</dbReference>
<dbReference type="GO" id="GO:1903475">
    <property type="term" value="P:mitotic actomyosin contractile ring assembly"/>
    <property type="evidence" value="ECO:0000315"/>
    <property type="project" value="PomBase"/>
</dbReference>
<dbReference type="GO" id="GO:1902404">
    <property type="term" value="P:mitotic actomyosin contractile ring contraction"/>
    <property type="evidence" value="ECO:0000315"/>
    <property type="project" value="PomBase"/>
</dbReference>
<dbReference type="GO" id="GO:0000281">
    <property type="term" value="P:mitotic cytokinesis"/>
    <property type="evidence" value="ECO:0000315"/>
    <property type="project" value="PomBase"/>
</dbReference>
<dbReference type="GO" id="GO:0090561">
    <property type="term" value="P:nuclear migration during mitotic telophase"/>
    <property type="evidence" value="ECO:0000316"/>
    <property type="project" value="PomBase"/>
</dbReference>
<dbReference type="CDD" id="cd01377">
    <property type="entry name" value="MYSc_class_II"/>
    <property type="match status" value="1"/>
</dbReference>
<dbReference type="FunFam" id="1.10.10.820:FF:000001">
    <property type="entry name" value="Myosin heavy chain"/>
    <property type="match status" value="1"/>
</dbReference>
<dbReference type="FunFam" id="1.20.58.530:FF:000001">
    <property type="entry name" value="Myosin heavy chain"/>
    <property type="match status" value="1"/>
</dbReference>
<dbReference type="FunFam" id="3.40.850.10:FF:000101">
    <property type="entry name" value="Slow myosin heavy chain 2"/>
    <property type="match status" value="1"/>
</dbReference>
<dbReference type="Gene3D" id="1.10.10.820">
    <property type="match status" value="1"/>
</dbReference>
<dbReference type="Gene3D" id="1.20.5.4820">
    <property type="match status" value="1"/>
</dbReference>
<dbReference type="Gene3D" id="1.20.58.530">
    <property type="match status" value="1"/>
</dbReference>
<dbReference type="Gene3D" id="3.40.850.10">
    <property type="entry name" value="Kinesin motor domain"/>
    <property type="match status" value="1"/>
</dbReference>
<dbReference type="Gene3D" id="2.30.30.360">
    <property type="entry name" value="Myosin S1 fragment, N-terminal"/>
    <property type="match status" value="1"/>
</dbReference>
<dbReference type="Gene3D" id="1.20.120.720">
    <property type="entry name" value="Myosin VI head, motor domain, U50 subdomain"/>
    <property type="match status" value="1"/>
</dbReference>
<dbReference type="InterPro" id="IPR036961">
    <property type="entry name" value="Kinesin_motor_dom_sf"/>
</dbReference>
<dbReference type="InterPro" id="IPR001609">
    <property type="entry name" value="Myosin_head_motor_dom-like"/>
</dbReference>
<dbReference type="InterPro" id="IPR004009">
    <property type="entry name" value="Myosin_N"/>
</dbReference>
<dbReference type="InterPro" id="IPR008989">
    <property type="entry name" value="Myosin_S1_N"/>
</dbReference>
<dbReference type="InterPro" id="IPR027417">
    <property type="entry name" value="P-loop_NTPase"/>
</dbReference>
<dbReference type="PANTHER" id="PTHR13140">
    <property type="entry name" value="MYOSIN"/>
    <property type="match status" value="1"/>
</dbReference>
<dbReference type="PANTHER" id="PTHR13140:SF857">
    <property type="entry name" value="MYOSIN-11"/>
    <property type="match status" value="1"/>
</dbReference>
<dbReference type="Pfam" id="PF00063">
    <property type="entry name" value="Myosin_head"/>
    <property type="match status" value="1"/>
</dbReference>
<dbReference type="Pfam" id="PF02736">
    <property type="entry name" value="Myosin_N"/>
    <property type="match status" value="1"/>
</dbReference>
<dbReference type="PRINTS" id="PR00193">
    <property type="entry name" value="MYOSINHEAVY"/>
</dbReference>
<dbReference type="SMART" id="SM00242">
    <property type="entry name" value="MYSc"/>
    <property type="match status" value="1"/>
</dbReference>
<dbReference type="SUPFAM" id="SSF50084">
    <property type="entry name" value="Myosin S1 fragment, N-terminal domain"/>
    <property type="match status" value="1"/>
</dbReference>
<dbReference type="SUPFAM" id="SSF52540">
    <property type="entry name" value="P-loop containing nucleoside triphosphate hydrolases"/>
    <property type="match status" value="1"/>
</dbReference>
<dbReference type="PROSITE" id="PS51456">
    <property type="entry name" value="MYOSIN_MOTOR"/>
    <property type="match status" value="1"/>
</dbReference>
<dbReference type="PROSITE" id="PS51844">
    <property type="entry name" value="SH3_LIKE"/>
    <property type="match status" value="1"/>
</dbReference>
<reference key="1">
    <citation type="journal article" date="1997" name="FEBS Lett.">
        <title>Identification of Myo3, a second type-II myosin heavy chain in the fission yeast Schizosaccharomyces pombe.</title>
        <authorList>
            <person name="Motegi F."/>
            <person name="Nakano K."/>
            <person name="Kitayama C."/>
            <person name="Yamamoto M."/>
            <person name="Mabuchi I."/>
        </authorList>
    </citation>
    <scope>NUCLEOTIDE SEQUENCE [GENOMIC DNA]</scope>
</reference>
<reference key="2">
    <citation type="journal article" date="1997" name="Mol. Biol. Cell">
        <title>Identification of a second myosin-II in Schizosaccharomyces pombe: Myp2p is conditionally required for cytokinesis.</title>
        <authorList>
            <person name="Bezanilla M."/>
            <person name="Forsburg S.L."/>
            <person name="Pollard T.D."/>
        </authorList>
    </citation>
    <scope>NUCLEOTIDE SEQUENCE [GENOMIC DNA]</scope>
</reference>
<reference key="3">
    <citation type="journal article" date="2002" name="Nature">
        <title>The genome sequence of Schizosaccharomyces pombe.</title>
        <authorList>
            <person name="Wood V."/>
            <person name="Gwilliam R."/>
            <person name="Rajandream M.A."/>
            <person name="Lyne M.H."/>
            <person name="Lyne R."/>
            <person name="Stewart A."/>
            <person name="Sgouros J.G."/>
            <person name="Peat N."/>
            <person name="Hayles J."/>
            <person name="Baker S.G."/>
            <person name="Basham D."/>
            <person name="Bowman S."/>
            <person name="Brooks K."/>
            <person name="Brown D."/>
            <person name="Brown S."/>
            <person name="Chillingworth T."/>
            <person name="Churcher C.M."/>
            <person name="Collins M."/>
            <person name="Connor R."/>
            <person name="Cronin A."/>
            <person name="Davis P."/>
            <person name="Feltwell T."/>
            <person name="Fraser A."/>
            <person name="Gentles S."/>
            <person name="Goble A."/>
            <person name="Hamlin N."/>
            <person name="Harris D.E."/>
            <person name="Hidalgo J."/>
            <person name="Hodgson G."/>
            <person name="Holroyd S."/>
            <person name="Hornsby T."/>
            <person name="Howarth S."/>
            <person name="Huckle E.J."/>
            <person name="Hunt S."/>
            <person name="Jagels K."/>
            <person name="James K.D."/>
            <person name="Jones L."/>
            <person name="Jones M."/>
            <person name="Leather S."/>
            <person name="McDonald S."/>
            <person name="McLean J."/>
            <person name="Mooney P."/>
            <person name="Moule S."/>
            <person name="Mungall K.L."/>
            <person name="Murphy L.D."/>
            <person name="Niblett D."/>
            <person name="Odell C."/>
            <person name="Oliver K."/>
            <person name="O'Neil S."/>
            <person name="Pearson D."/>
            <person name="Quail M.A."/>
            <person name="Rabbinowitsch E."/>
            <person name="Rutherford K.M."/>
            <person name="Rutter S."/>
            <person name="Saunders D."/>
            <person name="Seeger K."/>
            <person name="Sharp S."/>
            <person name="Skelton J."/>
            <person name="Simmonds M.N."/>
            <person name="Squares R."/>
            <person name="Squares S."/>
            <person name="Stevens K."/>
            <person name="Taylor K."/>
            <person name="Taylor R.G."/>
            <person name="Tivey A."/>
            <person name="Walsh S.V."/>
            <person name="Warren T."/>
            <person name="Whitehead S."/>
            <person name="Woodward J.R."/>
            <person name="Volckaert G."/>
            <person name="Aert R."/>
            <person name="Robben J."/>
            <person name="Grymonprez B."/>
            <person name="Weltjens I."/>
            <person name="Vanstreels E."/>
            <person name="Rieger M."/>
            <person name="Schaefer M."/>
            <person name="Mueller-Auer S."/>
            <person name="Gabel C."/>
            <person name="Fuchs M."/>
            <person name="Duesterhoeft A."/>
            <person name="Fritzc C."/>
            <person name="Holzer E."/>
            <person name="Moestl D."/>
            <person name="Hilbert H."/>
            <person name="Borzym K."/>
            <person name="Langer I."/>
            <person name="Beck A."/>
            <person name="Lehrach H."/>
            <person name="Reinhardt R."/>
            <person name="Pohl T.M."/>
            <person name="Eger P."/>
            <person name="Zimmermann W."/>
            <person name="Wedler H."/>
            <person name="Wambutt R."/>
            <person name="Purnelle B."/>
            <person name="Goffeau A."/>
            <person name="Cadieu E."/>
            <person name="Dreano S."/>
            <person name="Gloux S."/>
            <person name="Lelaure V."/>
            <person name="Mottier S."/>
            <person name="Galibert F."/>
            <person name="Aves S.J."/>
            <person name="Xiang Z."/>
            <person name="Hunt C."/>
            <person name="Moore K."/>
            <person name="Hurst S.M."/>
            <person name="Lucas M."/>
            <person name="Rochet M."/>
            <person name="Gaillardin C."/>
            <person name="Tallada V.A."/>
            <person name="Garzon A."/>
            <person name="Thode G."/>
            <person name="Daga R.R."/>
            <person name="Cruzado L."/>
            <person name="Jimenez J."/>
            <person name="Sanchez M."/>
            <person name="del Rey F."/>
            <person name="Benito J."/>
            <person name="Dominguez A."/>
            <person name="Revuelta J.L."/>
            <person name="Moreno S."/>
            <person name="Armstrong J."/>
            <person name="Forsburg S.L."/>
            <person name="Cerutti L."/>
            <person name="Lowe T."/>
            <person name="McCombie W.R."/>
            <person name="Paulsen I."/>
            <person name="Potashkin J."/>
            <person name="Shpakovski G.V."/>
            <person name="Ussery D."/>
            <person name="Barrell B.G."/>
            <person name="Nurse P."/>
        </authorList>
    </citation>
    <scope>NUCLEOTIDE SEQUENCE [LARGE SCALE GENOMIC DNA]</scope>
    <source>
        <strain>972 / ATCC 24843</strain>
    </source>
</reference>
<reference key="4">
    <citation type="journal article" date="2000" name="Genes Cells">
        <title>Large-scale screening of intracellular protein localization in living fission yeast cells by the use of a GFP-fusion genomic DNA library.</title>
        <authorList>
            <person name="Ding D.-Q."/>
            <person name="Tomita Y."/>
            <person name="Yamamoto A."/>
            <person name="Chikashige Y."/>
            <person name="Haraguchi T."/>
            <person name="Hiraoka Y."/>
        </authorList>
    </citation>
    <scope>NUCLEOTIDE SEQUENCE [LARGE SCALE GENOMIC DNA] OF 1871-2078</scope>
    <source>
        <strain>ATCC 38364 / 968</strain>
    </source>
</reference>
<reference key="5">
    <citation type="journal article" date="2008" name="J. Proteome Res.">
        <title>Phosphoproteome analysis of fission yeast.</title>
        <authorList>
            <person name="Wilson-Grady J.T."/>
            <person name="Villen J."/>
            <person name="Gygi S.P."/>
        </authorList>
    </citation>
    <scope>PHOSPHORYLATION [LARGE SCALE ANALYSIS] AT SER-1421</scope>
    <scope>IDENTIFICATION BY MASS SPECTROMETRY</scope>
</reference>
<organism>
    <name type="scientific">Schizosaccharomyces pombe (strain 972 / ATCC 24843)</name>
    <name type="common">Fission yeast</name>
    <dbReference type="NCBI Taxonomy" id="284812"/>
    <lineage>
        <taxon>Eukaryota</taxon>
        <taxon>Fungi</taxon>
        <taxon>Dikarya</taxon>
        <taxon>Ascomycota</taxon>
        <taxon>Taphrinomycotina</taxon>
        <taxon>Schizosaccharomycetes</taxon>
        <taxon>Schizosaccharomycetales</taxon>
        <taxon>Schizosaccharomycetaceae</taxon>
        <taxon>Schizosaccharomyces</taxon>
    </lineage>
</organism>
<feature type="chain" id="PRO_0000123481" description="Myosin type-2 heavy chain 2">
    <location>
        <begin position="1"/>
        <end position="2104"/>
    </location>
</feature>
<feature type="domain" description="Myosin N-terminal SH3-like" evidence="3">
    <location>
        <begin position="35"/>
        <end position="85"/>
    </location>
</feature>
<feature type="domain" description="Myosin motor" evidence="2">
    <location>
        <begin position="89"/>
        <end position="767"/>
    </location>
</feature>
<feature type="region of interest" description="Actin-binding" evidence="1">
    <location>
        <begin position="646"/>
        <end position="660"/>
    </location>
</feature>
<feature type="region of interest" description="Disordered" evidence="4">
    <location>
        <begin position="1245"/>
        <end position="1278"/>
    </location>
</feature>
<feature type="region of interest" description="Disordered" evidence="4">
    <location>
        <begin position="1398"/>
        <end position="1426"/>
    </location>
</feature>
<feature type="coiled-coil region" evidence="1">
    <location>
        <begin position="829"/>
        <end position="2104"/>
    </location>
</feature>
<feature type="compositionally biased region" description="Polar residues" evidence="4">
    <location>
        <begin position="1246"/>
        <end position="1259"/>
    </location>
</feature>
<feature type="compositionally biased region" description="Basic and acidic residues" evidence="4">
    <location>
        <begin position="1261"/>
        <end position="1278"/>
    </location>
</feature>
<feature type="compositionally biased region" description="Polar residues" evidence="4">
    <location>
        <begin position="1409"/>
        <end position="1424"/>
    </location>
</feature>
<feature type="binding site" evidence="1">
    <location>
        <begin position="182"/>
        <end position="189"/>
    </location>
    <ligand>
        <name>ATP</name>
        <dbReference type="ChEBI" id="CHEBI:30616"/>
    </ligand>
</feature>
<feature type="modified residue" description="Phosphoserine" evidence="5">
    <location>
        <position position="1421"/>
    </location>
</feature>
<feature type="sequence conflict" description="In Ref. 2; AAC04615." evidence="6" ref="2">
    <original>D</original>
    <variation>G</variation>
    <location>
        <position position="1193"/>
    </location>
</feature>
<feature type="sequence conflict" description="In Ref. 2; AAC04615." evidence="6" ref="2">
    <original>E</original>
    <variation>G</variation>
    <location>
        <position position="1304"/>
    </location>
</feature>
<feature type="sequence conflict" description="In Ref. 2; AAC04615." evidence="6" ref="2">
    <original>E</original>
    <variation>K</variation>
    <location>
        <position position="1344"/>
    </location>
</feature>
<feature type="sequence conflict" description="In Ref. 2; AAC04615." evidence="6" ref="2">
    <original>G</original>
    <variation>D</variation>
    <location>
        <position position="1420"/>
    </location>
</feature>
<evidence type="ECO:0000255" key="1"/>
<evidence type="ECO:0000255" key="2">
    <source>
        <dbReference type="PROSITE-ProRule" id="PRU00782"/>
    </source>
</evidence>
<evidence type="ECO:0000255" key="3">
    <source>
        <dbReference type="PROSITE-ProRule" id="PRU01190"/>
    </source>
</evidence>
<evidence type="ECO:0000256" key="4">
    <source>
        <dbReference type="SAM" id="MobiDB-lite"/>
    </source>
</evidence>
<evidence type="ECO:0000269" key="5">
    <source>
    </source>
</evidence>
<evidence type="ECO:0000305" key="6"/>
<accession>O14157</accession>
<accession>O42730</accession>
<accession>Q9UU49</accession>
<keyword id="KW-0009">Actin-binding</keyword>
<keyword id="KW-0067">ATP-binding</keyword>
<keyword id="KW-0175">Coiled coil</keyword>
<keyword id="KW-0505">Motor protein</keyword>
<keyword id="KW-0518">Myosin</keyword>
<keyword id="KW-0547">Nucleotide-binding</keyword>
<keyword id="KW-0597">Phosphoprotein</keyword>
<keyword id="KW-1185">Reference proteome</keyword>
<gene>
    <name type="primary">myo3</name>
    <name type="synonym">myp2</name>
    <name type="ORF">SPAC4A8.05c</name>
</gene>
<sequence length="2104" mass="242572">MSYLSKNGSNDNNNIIKKLVDAEKHCNAVKDASFDERTWIWIPDSKESFVKAWIVEDLGEKYRVKLERDGSERIVDGFDAEKVNPPKFDMVDDMAALTCLNEPSVVNNLTQRYEKDLIYTYSGLFLVAVNPYCHLPIYGDDVVRKYQSKQFKETKPHIFGTADAAYRSLLERRINQSILVTGESGAGKTETTKKVIQYLTSVTDASTSDSQQLEKKILETNPVLEAFGNAQTVRNNNSSRFGKFIRIEFSNNGSIVGANLDWYLLEKSRVIHPSSNERNYHVFYQLLRGADGSLLESLFLDRYVDHYSYLKNGLKHINGVDDGKEFQKLCFGLRTLGFDNNEIHSLFLIIASILHIGNIEVASDRSGQARFPSLTQIDQLCHLLEIPVDGFVNAALHPKSKAGREWIVTARTREQVVHTLQSLAKGLYERNFAHLVKRLNQTMYYSQSEHDGFIGVLDIAGFEIFTFNSFEQLCINFTNEKLQQFFNHYMFVLEQEEYTQERIEWDFIDYGNDLQPTIDAIEKSEPIGIFSCLDEDCVMPMATDATFTEKLHLLFKGKSDIYRPKKFSSEGFVLKHYAGDVEYDTKDWLEKNKDPLNACLAALMFKSTNSHVSSLFDDYSSNASGRDNIEKKGIFRTVSQRHRRQLSSLMHQLEATQPHFVRCIIPNNLKQPHNLDKSLVLHQLRCNGVLEGIRIAQTGFPNKLFYTEFRARYGILSQSLKRGYVEAKKATITIINELKLPSTVYRLGETKVFFKASVLGSLEDRRNALLRVIFNSFSARIRGFLTRRRLYRFNHRQDAAILLQHNLRQLKLLKPHPWWNLFLHLKPLLGTTQTDEYLRRKDALINNLQNQLESTKEVANELTITKERVLQLTNDLQEEQALAHEKDILVERANSRVEVVHERLSSLENQVTIADEKYEFLYAEKQSIEEDLANKQTEISYLSDLSSTLEKKLSSIKKDEQTISSKYKELEKDYLNIMADYQHSSQHLSNLEKAINEKNLNIRELNEKLMRLDDELLLKQRSYDTKVQELREENASLKDQCRTYESQLASLVSKYSETESELNKKEAELVIFQKEITEYRDQLHKAFQNPEKTHNINDVKSGPLNSDENIYSTSSTTLSILKDVQELKSLHTKEANQLSERIKEISEMLEQSIATEEKLRRKNSELCDIIEALKYQIQDQETEIISLNADNLDLKDTNGVLEKNASDFIDFQGIKSRYEHKISDLLNQLQKERCKVGLLKQKTENRSVTQHTLDGNSPHPSFEEKHSGDPLKRIDGNNDDRKIDNKLLKTISKSLDALQLTVEEELSNLYSLSKDLSFTDISGHIPNSIRKLEKGLSTLSELKERLNASNSDRPSPDIFKDTQAIMNSRKLLSNPNSDAQSGLISSLQKKLYNPESNMEFTGLKPLSPSKISNLPSSQPGSPSKRSGKMEALIRNFDQNSSIPDPFIVNQRNSVLQTEFEKINLKLKEATKSGILDNKDLSKFSELIQSLLKENEELKNLTTSNLGSDDKMLDFAPLLEDVPNNTRNQIKGFVEKAISSKRAIAKLYSASEEKLFSTEKALREITKERDRLLHGLQGPSVPTSPLKAPTASQLIIPNFDGSITNYSGEEETEWLQEEVNIMKIKELTSTVNKYREQLAMVQSLNEHAESSLSKAERSKNYLTGRLQEVEELARGFQTTNADLQNELADAVVKQKEYEVLYVEKSNDYNTLLLQKEKLMKQIDEFHVIRVQDLEEREKKDQLLFQRYQKELNGFKVQLEEEREKNLRIRQDNRHMHAEIGDIRTKFDELVLEKTNLLKENSILQADLQSLSRVNNSSSTAQQNAQSQLLSLTAQLQEVREANQTLRKDQDTLLRENRNLERKLHEVSEQLNKKFDSSARPFDEIEMEKEVLTLKSNLAQKDDLLSSLVERIKQIEMFALKTQKDSNNHREENLQLHRQLGVLQKEKKDLELKLFDLDLKTYPISTSKDVRMLQKQISDLEASFAASDIERIKGIDECRNRDRTIRQLEAQISKFDDDKKRIQSSVSRLEERNAQLRNQLEDVQASETQWKFALRRTEHALQEERERVKSLETDFDKYRSLLEGQRVKRSESRLSMRSNRSPSVLR</sequence>
<protein>
    <recommendedName>
        <fullName>Myosin type-2 heavy chain 2</fullName>
    </recommendedName>
    <alternativeName>
        <fullName>Myosin type II heavy chain 2</fullName>
    </alternativeName>
</protein>
<name>MYO3_SCHPO</name>